<sequence>MLAFAARTVVKPLGFLKPFSLMKASSRFKAHQDALPRLPVPPLQQSLDHYLKALQPIVSEEEWAHTKQLVDEFQASGGVGERLQKGLERRARKTENWLSEWWLKTAYLQYRQPVVIYSSPGVMLPKQDFVDLQGQLRFAAKLIEGVLDFKVMIDNETLPVEYLGGKPLCMNQYYQILSSCRVPGPKQDTVSNFSKTKKPPTHITVVHNYQFFELDVYHSDGTPLTADQIFVQLEKIWNSSLQTNKEPVGILTSNHRNSWAKAYNTLIKDKVNRDSVRSIQKSIFTVCLDATMPRVSEDVYRSHVAGQMLHGGGSRLNSGNRWFDKTLQFIVAEDGSCGLVYEHAAAEGPPIVTLLDYVIEYTKKPELVRSPLVPLPMPKKLRFNITPEIKSDIEKAKQNLSIMIQDLDITVMVFHHFGKDFPKSEKLSPDAFIQMALQLAYYRIYGQACATYESASLRMFHLGRTDTIRSASMDSLTFVKAMDDSSVTEHQKVELLRKAVQAHRGYTDRAIRGEAFDRHLLGLKLQAIEDLVSMPDIFMDTSYAIAMHFHLSTSQVPAKTDCVMFFGPVVPDGYGVCYNPMEAHINFSLSAYNSCAETNAARLAHYLEKALLDMRALLQSHPRAKL</sequence>
<comment type="function">
    <text evidence="4 6 7">Catalyzes the reversible transfer of acyl groups from carnitine to coenzyme A (CoA) and regulates the acyl-CoA/CoA ratio. Also plays a crucial role in the transport of fatty acids for beta-oxidation (PubMed:15099582, PubMed:29395073). Responsible for the synthesis of short- and branched-chain acylcarnitines (PubMed:23485643). Active towards some branched-chain amino acid oxidation pathway (BCAAO) intermediates (PubMed:23485643). Trans-2-enoyl-CoAs and 2-methylacyl-CoAs are poor substrates (PubMed:23485643).</text>
</comment>
<comment type="catalytic activity">
    <reaction evidence="4">
        <text>(R)-carnitine + acetyl-CoA = O-acetyl-(R)-carnitine + CoA</text>
        <dbReference type="Rhea" id="RHEA:21136"/>
        <dbReference type="ChEBI" id="CHEBI:16347"/>
        <dbReference type="ChEBI" id="CHEBI:57287"/>
        <dbReference type="ChEBI" id="CHEBI:57288"/>
        <dbReference type="ChEBI" id="CHEBI:57589"/>
        <dbReference type="EC" id="2.3.1.7"/>
    </reaction>
    <physiologicalReaction direction="left-to-right" evidence="14">
        <dbReference type="Rhea" id="RHEA:21137"/>
    </physiologicalReaction>
</comment>
<comment type="catalytic activity">
    <reaction evidence="6">
        <text>propanoyl-CoA + (R)-carnitine = O-propanoyl-(R)-carnitine + CoA</text>
        <dbReference type="Rhea" id="RHEA:44976"/>
        <dbReference type="ChEBI" id="CHEBI:16347"/>
        <dbReference type="ChEBI" id="CHEBI:53210"/>
        <dbReference type="ChEBI" id="CHEBI:57287"/>
        <dbReference type="ChEBI" id="CHEBI:57392"/>
    </reaction>
    <physiologicalReaction direction="left-to-right" evidence="15">
        <dbReference type="Rhea" id="RHEA:44977"/>
    </physiologicalReaction>
</comment>
<comment type="catalytic activity">
    <reaction evidence="6">
        <text>butanoyl-CoA + (R)-carnitine = O-butanoyl-(R)-carnitine + CoA</text>
        <dbReference type="Rhea" id="RHEA:44980"/>
        <dbReference type="ChEBI" id="CHEBI:16347"/>
        <dbReference type="ChEBI" id="CHEBI:21949"/>
        <dbReference type="ChEBI" id="CHEBI:57287"/>
        <dbReference type="ChEBI" id="CHEBI:57371"/>
    </reaction>
    <physiologicalReaction direction="left-to-right" evidence="15">
        <dbReference type="Rhea" id="RHEA:44981"/>
    </physiologicalReaction>
</comment>
<comment type="catalytic activity">
    <reaction evidence="6">
        <text>hexanoyl-CoA + (R)-carnitine = O-hexanoyl-(R)-carnitine + CoA</text>
        <dbReference type="Rhea" id="RHEA:44972"/>
        <dbReference type="ChEBI" id="CHEBI:16347"/>
        <dbReference type="ChEBI" id="CHEBI:57287"/>
        <dbReference type="ChEBI" id="CHEBI:62620"/>
        <dbReference type="ChEBI" id="CHEBI:84834"/>
    </reaction>
    <physiologicalReaction direction="left-to-right" evidence="15">
        <dbReference type="Rhea" id="RHEA:44973"/>
    </physiologicalReaction>
</comment>
<comment type="catalytic activity">
    <reaction evidence="6">
        <text>octanoyl-CoA + (R)-carnitine = O-octanoyl-(R)-carnitine + CoA</text>
        <dbReference type="Rhea" id="RHEA:17177"/>
        <dbReference type="ChEBI" id="CHEBI:16347"/>
        <dbReference type="ChEBI" id="CHEBI:18102"/>
        <dbReference type="ChEBI" id="CHEBI:57287"/>
        <dbReference type="ChEBI" id="CHEBI:57386"/>
        <dbReference type="EC" id="2.3.1.137"/>
    </reaction>
    <physiologicalReaction direction="left-to-right" evidence="15">
        <dbReference type="Rhea" id="RHEA:17178"/>
    </physiologicalReaction>
</comment>
<comment type="catalytic activity">
    <reaction evidence="6">
        <text>decanoyl-CoA + (R)-carnitine = O-decanoyl-(R)-carnitine + CoA</text>
        <dbReference type="Rhea" id="RHEA:44828"/>
        <dbReference type="ChEBI" id="CHEBI:16347"/>
        <dbReference type="ChEBI" id="CHEBI:28717"/>
        <dbReference type="ChEBI" id="CHEBI:57287"/>
        <dbReference type="ChEBI" id="CHEBI:61430"/>
    </reaction>
    <physiologicalReaction direction="left-to-right" evidence="15">
        <dbReference type="Rhea" id="RHEA:44829"/>
    </physiologicalReaction>
</comment>
<comment type="catalytic activity">
    <reaction evidence="6">
        <text>3-methylbutanoyl-CoA + (R)-carnitine = O-3-methylbutanoyl-(R)-carnitine + CoA</text>
        <dbReference type="Rhea" id="RHEA:44984"/>
        <dbReference type="ChEBI" id="CHEBI:16347"/>
        <dbReference type="ChEBI" id="CHEBI:57287"/>
        <dbReference type="ChEBI" id="CHEBI:57345"/>
        <dbReference type="ChEBI" id="CHEBI:70819"/>
    </reaction>
    <physiologicalReaction direction="left-to-right" evidence="15">
        <dbReference type="Rhea" id="RHEA:44985"/>
    </physiologicalReaction>
</comment>
<comment type="catalytic activity">
    <reaction evidence="6">
        <text>2-methylpropanoyl-CoA + (R)-carnitine = O-isobutanoyl-(R)-carnitine + CoA</text>
        <dbReference type="Rhea" id="RHEA:44988"/>
        <dbReference type="ChEBI" id="CHEBI:16347"/>
        <dbReference type="ChEBI" id="CHEBI:57287"/>
        <dbReference type="ChEBI" id="CHEBI:57338"/>
        <dbReference type="ChEBI" id="CHEBI:84838"/>
    </reaction>
    <physiologicalReaction direction="left-to-right" evidence="15">
        <dbReference type="Rhea" id="RHEA:44989"/>
    </physiologicalReaction>
</comment>
<comment type="catalytic activity">
    <reaction evidence="6">
        <text>2-methylbutanoyl-CoA + (R)-carnitine = O-2-methylbutanoyl-(R)-carnitine + CoA</text>
        <dbReference type="Rhea" id="RHEA:44992"/>
        <dbReference type="ChEBI" id="CHEBI:16347"/>
        <dbReference type="ChEBI" id="CHEBI:57287"/>
        <dbReference type="ChEBI" id="CHEBI:57336"/>
        <dbReference type="ChEBI" id="CHEBI:84840"/>
    </reaction>
    <physiologicalReaction direction="left-to-right" evidence="15">
        <dbReference type="Rhea" id="RHEA:44993"/>
    </physiologicalReaction>
</comment>
<comment type="catalytic activity">
    <reaction evidence="6">
        <text>acetoacetyl-CoA + (R)-carnitine = O-3-oxobutanoyl-(R)-carnitine + CoA</text>
        <dbReference type="Rhea" id="RHEA:44996"/>
        <dbReference type="ChEBI" id="CHEBI:16347"/>
        <dbReference type="ChEBI" id="CHEBI:57286"/>
        <dbReference type="ChEBI" id="CHEBI:57287"/>
        <dbReference type="ChEBI" id="CHEBI:84841"/>
    </reaction>
    <physiologicalReaction direction="left-to-right" evidence="15">
        <dbReference type="Rhea" id="RHEA:44997"/>
    </physiologicalReaction>
</comment>
<comment type="catalytic activity">
    <reaction evidence="6">
        <text>3-hydroxybutanoyl-CoA + (R)-carnitine = O-3-hydroxybutanoyl-(R)-carnitine + CoA</text>
        <dbReference type="Rhea" id="RHEA:45000"/>
        <dbReference type="ChEBI" id="CHEBI:16347"/>
        <dbReference type="ChEBI" id="CHEBI:57287"/>
        <dbReference type="ChEBI" id="CHEBI:78611"/>
        <dbReference type="ChEBI" id="CHEBI:84842"/>
    </reaction>
    <physiologicalReaction direction="left-to-right" evidence="15">
        <dbReference type="Rhea" id="RHEA:45001"/>
    </physiologicalReaction>
</comment>
<comment type="catalytic activity">
    <reaction evidence="6">
        <text>4,8-dimethylnonanoyl-CoA + (R)-carnitine = O-4,8-dimethylnonanoyl-(R)-carnitine + CoA</text>
        <dbReference type="Rhea" id="RHEA:44860"/>
        <dbReference type="ChEBI" id="CHEBI:16347"/>
        <dbReference type="ChEBI" id="CHEBI:57287"/>
        <dbReference type="ChEBI" id="CHEBI:77061"/>
        <dbReference type="ChEBI" id="CHEBI:84654"/>
    </reaction>
    <physiologicalReaction direction="left-to-right" evidence="15">
        <dbReference type="Rhea" id="RHEA:44861"/>
    </physiologicalReaction>
</comment>
<comment type="catalytic activity">
    <reaction evidence="6">
        <text>2,6-dimethylheptanoyl-CoA + (R)-carnitine = O-2,6-dimethylheptanoyl-(R)-carnitine + CoA</text>
        <dbReference type="Rhea" id="RHEA:45004"/>
        <dbReference type="ChEBI" id="CHEBI:16347"/>
        <dbReference type="ChEBI" id="CHEBI:57287"/>
        <dbReference type="ChEBI" id="CHEBI:84843"/>
        <dbReference type="ChEBI" id="CHEBI:84847"/>
    </reaction>
    <physiologicalReaction direction="left-to-right" evidence="15">
        <dbReference type="Rhea" id="RHEA:45005"/>
    </physiologicalReaction>
</comment>
<comment type="biophysicochemical properties">
    <molecule>Isoform 1</molecule>
    <kinetics>
        <KM evidence="6">240 uM for acetyl-CoA</KM>
        <KM evidence="6">499 uM for butyryl-CoA</KM>
        <KM evidence="6">590 uM for trans-2-butenoyl-CoA</KM>
        <Vmax evidence="6">2.5 nmol/min/ug enzyme towards acetyl-CoA</Vmax>
        <Vmax evidence="6">10.7 nmol/min/ug enzyme towards butyryl-CoA</Vmax>
        <Vmax evidence="6">0.13 nmol/min/ug enzyme towards trans-2-butenoyl-CoA</Vmax>
    </kinetics>
</comment>
<comment type="biophysicochemical properties">
    <molecule>Isoform 2</molecule>
    <kinetics>
        <KM evidence="6">78 uM for acetyl-CoA</KM>
        <Vmax evidence="6">4.4 nmol/min/ug enzyme towards acetyl-CoA</Vmax>
    </kinetics>
</comment>
<comment type="subunit">
    <text evidence="3 4">Monomer.</text>
</comment>
<comment type="subcellular location">
    <subcellularLocation>
        <location evidence="13">Endoplasmic reticulum</location>
    </subcellularLocation>
    <subcellularLocation>
        <location evidence="13">Peroxisome</location>
    </subcellularLocation>
    <subcellularLocation>
        <location evidence="13">Mitochondrion inner membrane</location>
        <topology evidence="13">Peripheral membrane protein</topology>
        <orientation evidence="13">Matrix side</orientation>
    </subcellularLocation>
</comment>
<comment type="subcellular location">
    <molecule>Isoform 1</molecule>
    <subcellularLocation>
        <location evidence="15">Mitochondrion</location>
    </subcellularLocation>
</comment>
<comment type="subcellular location">
    <molecule>Isoform 2</molecule>
    <subcellularLocation>
        <location evidence="15">Peroxisome</location>
    </subcellularLocation>
</comment>
<comment type="alternative products">
    <event type="alternative splicing"/>
    <isoform>
        <id>P43155-1</id>
        <name>1</name>
        <name>SM-1400</name>
        <sequence type="displayed"/>
    </isoform>
    <isoform>
        <id>P43155-2</id>
        <name>2</name>
        <name>SM-1200</name>
        <sequence type="described" ref="VSP_000792"/>
    </isoform>
    <isoform>
        <id>P43155-3</id>
        <name>3</name>
        <sequence type="described" ref="VSP_012798"/>
    </isoform>
</comment>
<comment type="tissue specificity">
    <text>Mostly in skeletal muscle, less in heart, liver and pancreas, only weakly detectable in brain, placenta, lung and kidney.</text>
</comment>
<comment type="disease" evidence="7">
    <disease id="DI-05218">
        <name>Neurodegeneration with brain iron accumulation 8</name>
        <acronym>NBIA8</acronym>
        <description>A neurodegenerative disorder associated with iron accumulation, primarily in the basal ganglia. Disease onset is in early childhood. Clinical features include speech delay, progressive cerebellar ataxia, unbalanced gait, and loss of ambulation. NBIA8 transmission pattern is consistent with autosomal recessive inheritance.</description>
        <dbReference type="MIM" id="617917"/>
    </disease>
    <text>The disease is caused by variants affecting the gene represented in this entry.</text>
</comment>
<comment type="similarity">
    <text evidence="13">Belongs to the carnitine/choline acetyltransferase family.</text>
</comment>
<evidence type="ECO:0000250" key="1">
    <source>
        <dbReference type="UniProtKB" id="P47934"/>
    </source>
</evidence>
<evidence type="ECO:0000255" key="2"/>
<evidence type="ECO:0000269" key="3">
    <source>
    </source>
</evidence>
<evidence type="ECO:0000269" key="4">
    <source>
    </source>
</evidence>
<evidence type="ECO:0000269" key="5">
    <source>
    </source>
</evidence>
<evidence type="ECO:0000269" key="6">
    <source>
    </source>
</evidence>
<evidence type="ECO:0000269" key="7">
    <source>
    </source>
</evidence>
<evidence type="ECO:0000269" key="8">
    <source>
    </source>
</evidence>
<evidence type="ECO:0000269" key="9">
    <source ref="1"/>
</evidence>
<evidence type="ECO:0000303" key="10">
    <source>
    </source>
</evidence>
<evidence type="ECO:0000303" key="11">
    <source>
    </source>
</evidence>
<evidence type="ECO:0000303" key="12">
    <source ref="1"/>
</evidence>
<evidence type="ECO:0000305" key="13"/>
<evidence type="ECO:0000305" key="14">
    <source>
    </source>
</evidence>
<evidence type="ECO:0000305" key="15">
    <source>
    </source>
</evidence>
<evidence type="ECO:0000312" key="16">
    <source>
        <dbReference type="HGNC" id="HGNC:2342"/>
    </source>
</evidence>
<evidence type="ECO:0007744" key="17">
    <source>
    </source>
</evidence>
<evidence type="ECO:0007829" key="18">
    <source>
        <dbReference type="PDB" id="1NM8"/>
    </source>
</evidence>
<evidence type="ECO:0007829" key="19">
    <source>
        <dbReference type="PDB" id="1S5O"/>
    </source>
</evidence>
<accession>P43155</accession>
<accession>Q5T952</accession>
<accession>Q9BW16</accession>
<proteinExistence type="evidence at protein level"/>
<organism>
    <name type="scientific">Homo sapiens</name>
    <name type="common">Human</name>
    <dbReference type="NCBI Taxonomy" id="9606"/>
    <lineage>
        <taxon>Eukaryota</taxon>
        <taxon>Metazoa</taxon>
        <taxon>Chordata</taxon>
        <taxon>Craniata</taxon>
        <taxon>Vertebrata</taxon>
        <taxon>Euteleostomi</taxon>
        <taxon>Mammalia</taxon>
        <taxon>Eutheria</taxon>
        <taxon>Euarchontoglires</taxon>
        <taxon>Primates</taxon>
        <taxon>Haplorrhini</taxon>
        <taxon>Catarrhini</taxon>
        <taxon>Hominidae</taxon>
        <taxon>Homo</taxon>
    </lineage>
</organism>
<name>CACP_HUMAN</name>
<keyword id="KW-0002">3D-structure</keyword>
<keyword id="KW-0007">Acetylation</keyword>
<keyword id="KW-0012">Acyltransferase</keyword>
<keyword id="KW-0025">Alternative splicing</keyword>
<keyword id="KW-0903">Direct protein sequencing</keyword>
<keyword id="KW-0256">Endoplasmic reticulum</keyword>
<keyword id="KW-0276">Fatty acid metabolism</keyword>
<keyword id="KW-0443">Lipid metabolism</keyword>
<keyword id="KW-0472">Membrane</keyword>
<keyword id="KW-0496">Mitochondrion</keyword>
<keyword id="KW-0999">Mitochondrion inner membrane</keyword>
<keyword id="KW-0523">Neurodegeneration</keyword>
<keyword id="KW-0576">Peroxisome</keyword>
<keyword id="KW-1267">Proteomics identification</keyword>
<keyword id="KW-1185">Reference proteome</keyword>
<keyword id="KW-0808">Transferase</keyword>
<keyword id="KW-0813">Transport</keyword>
<dbReference type="EC" id="2.3.1.137" evidence="6"/>
<dbReference type="EC" id="2.3.1.7" evidence="4 6"/>
<dbReference type="EMBL" id="BT006801">
    <property type="protein sequence ID" value="AAP35447.1"/>
    <property type="molecule type" value="mRNA"/>
</dbReference>
<dbReference type="EMBL" id="AL158151">
    <property type="status" value="NOT_ANNOTATED_CDS"/>
    <property type="molecule type" value="Genomic_DNA"/>
</dbReference>
<dbReference type="EMBL" id="BC000723">
    <property type="protein sequence ID" value="AAH00723.1"/>
    <property type="molecule type" value="mRNA"/>
</dbReference>
<dbReference type="EMBL" id="X79825">
    <property type="status" value="NOT_ANNOTATED_CDS"/>
    <property type="molecule type" value="Genomic_DNA"/>
</dbReference>
<dbReference type="EMBL" id="X79827">
    <property type="status" value="NOT_ANNOTATED_CDS"/>
    <property type="molecule type" value="Genomic_DNA"/>
</dbReference>
<dbReference type="EMBL" id="X78706">
    <property type="protein sequence ID" value="CAA55359.1"/>
    <property type="molecule type" value="mRNA"/>
</dbReference>
<dbReference type="CCDS" id="CCDS6919.1">
    <molecule id="P43155-1"/>
</dbReference>
<dbReference type="PIR" id="A55720">
    <property type="entry name" value="A55720"/>
</dbReference>
<dbReference type="RefSeq" id="NP_001244292.2">
    <molecule id="P43155-2"/>
    <property type="nucleotide sequence ID" value="NM_001257363.3"/>
</dbReference>
<dbReference type="RefSeq" id="XP_005251765.1">
    <molecule id="P43155-2"/>
    <property type="nucleotide sequence ID" value="XM_005251708.5"/>
</dbReference>
<dbReference type="RefSeq" id="XP_047278727.1">
    <molecule id="P43155-2"/>
    <property type="nucleotide sequence ID" value="XM_047422771.1"/>
</dbReference>
<dbReference type="RefSeq" id="XP_047278728.1">
    <molecule id="P43155-2"/>
    <property type="nucleotide sequence ID" value="XM_047422772.1"/>
</dbReference>
<dbReference type="PDB" id="1NM8">
    <property type="method" value="X-ray"/>
    <property type="resolution" value="1.60 A"/>
    <property type="chains" value="A=35-626"/>
</dbReference>
<dbReference type="PDB" id="1S5O">
    <property type="method" value="X-ray"/>
    <property type="resolution" value="1.80 A"/>
    <property type="chains" value="A=35-626"/>
</dbReference>
<dbReference type="PDBsum" id="1NM8"/>
<dbReference type="PDBsum" id="1S5O"/>
<dbReference type="SMR" id="P43155"/>
<dbReference type="BioGRID" id="107774">
    <property type="interactions" value="69"/>
</dbReference>
<dbReference type="FunCoup" id="P43155">
    <property type="interactions" value="1335"/>
</dbReference>
<dbReference type="IntAct" id="P43155">
    <property type="interactions" value="43"/>
</dbReference>
<dbReference type="STRING" id="9606.ENSP00000315013"/>
<dbReference type="BindingDB" id="P43155"/>
<dbReference type="ChEMBL" id="CHEMBL3184"/>
<dbReference type="DrugBank" id="DB02648">
    <property type="generic name" value="(3-Carboxy-2-(R)-Hydroxy-Propyl)-Trimethyl-Ammonium"/>
</dbReference>
<dbReference type="DrugBank" id="DB01992">
    <property type="generic name" value="Coenzyme A"/>
</dbReference>
<dbReference type="DrugBank" id="DB00583">
    <property type="generic name" value="Levocarnitine"/>
</dbReference>
<dbReference type="SwissLipids" id="SLP:000001053"/>
<dbReference type="SwissLipids" id="SLP:000001057">
    <molecule id="P43155-1"/>
</dbReference>
<dbReference type="SwissLipids" id="SLP:000001058">
    <molecule id="P43155-2"/>
</dbReference>
<dbReference type="TCDB" id="4.C.2.1.1">
    <property type="family name" value="the carnitine o-acyl transferase (carat) family"/>
</dbReference>
<dbReference type="GlyConnect" id="1073">
    <property type="glycosylation" value="4 N-Linked glycans (2 sites)"/>
</dbReference>
<dbReference type="GlyCosmos" id="P43155">
    <property type="glycosylation" value="2 sites, 5 glycans"/>
</dbReference>
<dbReference type="GlyGen" id="P43155">
    <property type="glycosylation" value="2 sites, 5 N-linked glycans (2 sites)"/>
</dbReference>
<dbReference type="iPTMnet" id="P43155"/>
<dbReference type="PhosphoSitePlus" id="P43155"/>
<dbReference type="SwissPalm" id="P43155"/>
<dbReference type="BioMuta" id="CRAT"/>
<dbReference type="DMDM" id="215274265"/>
<dbReference type="CPTAC" id="CPTAC-341"/>
<dbReference type="CPTAC" id="CPTAC-342"/>
<dbReference type="jPOST" id="P43155"/>
<dbReference type="MassIVE" id="P43155"/>
<dbReference type="PaxDb" id="9606-ENSP00000315013"/>
<dbReference type="PeptideAtlas" id="P43155"/>
<dbReference type="ProteomicsDB" id="55592">
    <molecule id="P43155-1"/>
</dbReference>
<dbReference type="ProteomicsDB" id="55593">
    <molecule id="P43155-2"/>
</dbReference>
<dbReference type="ProteomicsDB" id="55594">
    <molecule id="P43155-3"/>
</dbReference>
<dbReference type="Pumba" id="P43155"/>
<dbReference type="Antibodypedia" id="17825">
    <property type="antibodies" value="238 antibodies from 30 providers"/>
</dbReference>
<dbReference type="DNASU" id="1384"/>
<dbReference type="Ensembl" id="ENST00000318080.7">
    <molecule id="P43155-1"/>
    <property type="protein sequence ID" value="ENSP00000315013.2"/>
    <property type="gene ID" value="ENSG00000095321.18"/>
</dbReference>
<dbReference type="GeneID" id="1384"/>
<dbReference type="MANE-Select" id="ENST00000318080.7">
    <property type="protein sequence ID" value="ENSP00000315013.2"/>
    <property type="RefSeq nucleotide sequence ID" value="NM_000755.5"/>
    <property type="RefSeq protein sequence ID" value="NP_000746.3"/>
</dbReference>
<dbReference type="UCSC" id="uc004bxh.4">
    <molecule id="P43155-1"/>
    <property type="organism name" value="human"/>
</dbReference>
<dbReference type="AGR" id="HGNC:2342"/>
<dbReference type="CTD" id="1384"/>
<dbReference type="DisGeNET" id="1384"/>
<dbReference type="GeneCards" id="CRAT"/>
<dbReference type="HGNC" id="HGNC:2342">
    <property type="gene designation" value="CRAT"/>
</dbReference>
<dbReference type="HPA" id="ENSG00000095321">
    <property type="expression patterns" value="Tissue enhanced (skeletal muscle, tongue)"/>
</dbReference>
<dbReference type="MalaCards" id="CRAT"/>
<dbReference type="MIM" id="600184">
    <property type="type" value="gene"/>
</dbReference>
<dbReference type="MIM" id="617917">
    <property type="type" value="phenotype"/>
</dbReference>
<dbReference type="neXtProt" id="NX_P43155"/>
<dbReference type="OpenTargets" id="ENSG00000095321"/>
<dbReference type="PharmGKB" id="PA26862"/>
<dbReference type="VEuPathDB" id="HostDB:ENSG00000095321"/>
<dbReference type="eggNOG" id="KOG3717">
    <property type="taxonomic scope" value="Eukaryota"/>
</dbReference>
<dbReference type="GeneTree" id="ENSGT01130000278297"/>
<dbReference type="HOGENOM" id="CLU_013513_5_0_1"/>
<dbReference type="InParanoid" id="P43155"/>
<dbReference type="OMA" id="ENHSKGP"/>
<dbReference type="OrthoDB" id="240216at2759"/>
<dbReference type="PAN-GO" id="P43155">
    <property type="GO annotations" value="3 GO annotations based on evolutionary models"/>
</dbReference>
<dbReference type="PhylomeDB" id="P43155"/>
<dbReference type="TreeFam" id="TF313836"/>
<dbReference type="BioCyc" id="MetaCyc:HS01816-MONOMER"/>
<dbReference type="BRENDA" id="2.3.1.7">
    <property type="organism ID" value="2681"/>
</dbReference>
<dbReference type="PathwayCommons" id="P43155"/>
<dbReference type="Reactome" id="R-HSA-389887">
    <property type="pathway name" value="Beta-oxidation of pristanoyl-CoA"/>
</dbReference>
<dbReference type="Reactome" id="R-HSA-9033241">
    <property type="pathway name" value="Peroxisomal protein import"/>
</dbReference>
<dbReference type="SABIO-RK" id="P43155"/>
<dbReference type="SignaLink" id="P43155"/>
<dbReference type="BioGRID-ORCS" id="1384">
    <property type="hits" value="11 hits in 1161 CRISPR screens"/>
</dbReference>
<dbReference type="CD-CODE" id="FB4E32DD">
    <property type="entry name" value="Presynaptic clusters and postsynaptic densities"/>
</dbReference>
<dbReference type="ChiTaRS" id="CRAT">
    <property type="organism name" value="human"/>
</dbReference>
<dbReference type="EvolutionaryTrace" id="P43155"/>
<dbReference type="GeneWiki" id="CRAT_(gene)"/>
<dbReference type="GenomeRNAi" id="1384"/>
<dbReference type="Pharos" id="P43155">
    <property type="development level" value="Tbio"/>
</dbReference>
<dbReference type="PRO" id="PR:P43155"/>
<dbReference type="Proteomes" id="UP000005640">
    <property type="component" value="Chromosome 9"/>
</dbReference>
<dbReference type="RNAct" id="P43155">
    <property type="molecule type" value="protein"/>
</dbReference>
<dbReference type="Bgee" id="ENSG00000095321">
    <property type="expression patterns" value="Expressed in sperm and 204 other cell types or tissues"/>
</dbReference>
<dbReference type="ExpressionAtlas" id="P43155">
    <property type="expression patterns" value="baseline and differential"/>
</dbReference>
<dbReference type="GO" id="GO:0005829">
    <property type="term" value="C:cytosol"/>
    <property type="evidence" value="ECO:0000304"/>
    <property type="project" value="Reactome"/>
</dbReference>
<dbReference type="GO" id="GO:0005783">
    <property type="term" value="C:endoplasmic reticulum"/>
    <property type="evidence" value="ECO:0007669"/>
    <property type="project" value="UniProtKB-SubCell"/>
</dbReference>
<dbReference type="GO" id="GO:0005743">
    <property type="term" value="C:mitochondrial inner membrane"/>
    <property type="evidence" value="ECO:0007669"/>
    <property type="project" value="UniProtKB-SubCell"/>
</dbReference>
<dbReference type="GO" id="GO:0005739">
    <property type="term" value="C:mitochondrion"/>
    <property type="evidence" value="ECO:0000314"/>
    <property type="project" value="UniProtKB"/>
</dbReference>
<dbReference type="GO" id="GO:0005782">
    <property type="term" value="C:peroxisomal matrix"/>
    <property type="evidence" value="ECO:0000304"/>
    <property type="project" value="Reactome"/>
</dbReference>
<dbReference type="GO" id="GO:0005777">
    <property type="term" value="C:peroxisome"/>
    <property type="evidence" value="ECO:0000314"/>
    <property type="project" value="UniProtKB"/>
</dbReference>
<dbReference type="GO" id="GO:0003997">
    <property type="term" value="F:acyl-CoA oxidase activity"/>
    <property type="evidence" value="ECO:0000314"/>
    <property type="project" value="UniProtKB"/>
</dbReference>
<dbReference type="GO" id="GO:0004092">
    <property type="term" value="F:carnitine O-acetyltransferase activity"/>
    <property type="evidence" value="ECO:0000314"/>
    <property type="project" value="UniProtKB"/>
</dbReference>
<dbReference type="GO" id="GO:0008458">
    <property type="term" value="F:carnitine O-octanoyltransferase activity"/>
    <property type="evidence" value="ECO:0007669"/>
    <property type="project" value="UniProtKB-EC"/>
</dbReference>
<dbReference type="GO" id="GO:0019254">
    <property type="term" value="P:carnitine metabolic process, CoA-linked"/>
    <property type="evidence" value="ECO:0000314"/>
    <property type="project" value="UniProtKB"/>
</dbReference>
<dbReference type="GO" id="GO:0033540">
    <property type="term" value="P:fatty acid beta-oxidation using acyl-CoA oxidase"/>
    <property type="evidence" value="ECO:0000314"/>
    <property type="project" value="UniProtKB"/>
</dbReference>
<dbReference type="GO" id="GO:0051791">
    <property type="term" value="P:medium-chain fatty acid metabolic process"/>
    <property type="evidence" value="ECO:0000314"/>
    <property type="project" value="UniProtKB"/>
</dbReference>
<dbReference type="GO" id="GO:0046459">
    <property type="term" value="P:short-chain fatty acid metabolic process"/>
    <property type="evidence" value="ECO:0000314"/>
    <property type="project" value="UniProtKB"/>
</dbReference>
<dbReference type="FunFam" id="3.30.559.10:FF:000001">
    <property type="entry name" value="Carnitine O-acetyltransferase"/>
    <property type="match status" value="1"/>
</dbReference>
<dbReference type="FunFam" id="3.30.559.70:FF:000002">
    <property type="entry name" value="Carnitine O-acetyltransferase"/>
    <property type="match status" value="1"/>
</dbReference>
<dbReference type="Gene3D" id="3.30.559.10">
    <property type="entry name" value="Chloramphenicol acetyltransferase-like domain"/>
    <property type="match status" value="1"/>
</dbReference>
<dbReference type="Gene3D" id="3.30.559.70">
    <property type="entry name" value="Choline/Carnitine o-acyltransferase, domain 2"/>
    <property type="match status" value="1"/>
</dbReference>
<dbReference type="InterPro" id="IPR000542">
    <property type="entry name" value="Carn_acyl_trans"/>
</dbReference>
<dbReference type="InterPro" id="IPR023213">
    <property type="entry name" value="CAT-like_dom_sf"/>
</dbReference>
<dbReference type="InterPro" id="IPR039551">
    <property type="entry name" value="Cho/carn_acyl_trans"/>
</dbReference>
<dbReference type="InterPro" id="IPR042231">
    <property type="entry name" value="Cho/carn_acyl_trans_2"/>
</dbReference>
<dbReference type="PANTHER" id="PTHR22589:SF50">
    <property type="entry name" value="CARNITINE O-ACETYLTRANSFERASE"/>
    <property type="match status" value="1"/>
</dbReference>
<dbReference type="PANTHER" id="PTHR22589">
    <property type="entry name" value="CARNITINE O-ACYLTRANSFERASE"/>
    <property type="match status" value="1"/>
</dbReference>
<dbReference type="Pfam" id="PF00755">
    <property type="entry name" value="Carn_acyltransf"/>
    <property type="match status" value="1"/>
</dbReference>
<dbReference type="SUPFAM" id="SSF52777">
    <property type="entry name" value="CoA-dependent acyltransferases"/>
    <property type="match status" value="2"/>
</dbReference>
<dbReference type="PROSITE" id="PS00439">
    <property type="entry name" value="ACYLTRANSF_C_1"/>
    <property type="match status" value="1"/>
</dbReference>
<dbReference type="PROSITE" id="PS00440">
    <property type="entry name" value="ACYLTRANSF_C_2"/>
    <property type="match status" value="1"/>
</dbReference>
<gene>
    <name evidence="16" type="primary">CRAT</name>
    <name type="synonym">CAT1</name>
</gene>
<feature type="chain" id="PRO_0000210172" description="Carnitine O-acetyltransferase">
    <location>
        <begin position="1"/>
        <end position="626"/>
    </location>
</feature>
<feature type="short sequence motif" description="Microbody targeting signal" evidence="2">
    <location>
        <begin position="624"/>
        <end position="626"/>
    </location>
</feature>
<feature type="active site" description="Proton acceptor" evidence="13">
    <location>
        <position position="343"/>
    </location>
</feature>
<feature type="binding site" evidence="1">
    <location>
        <position position="419"/>
    </location>
    <ligand>
        <name>CoA</name>
        <dbReference type="ChEBI" id="CHEBI:57287"/>
    </ligand>
</feature>
<feature type="binding site" evidence="1">
    <location>
        <begin position="423"/>
        <end position="430"/>
    </location>
    <ligand>
        <name>CoA</name>
        <dbReference type="ChEBI" id="CHEBI:57287"/>
    </ligand>
</feature>
<feature type="binding site" evidence="4">
    <location>
        <position position="452"/>
    </location>
    <ligand>
        <name>(R)-carnitine</name>
        <dbReference type="ChEBI" id="CHEBI:16347"/>
    </ligand>
</feature>
<feature type="binding site" evidence="4">
    <location>
        <position position="454"/>
    </location>
    <ligand>
        <name>(R)-carnitine</name>
        <dbReference type="ChEBI" id="CHEBI:16347"/>
    </ligand>
</feature>
<feature type="binding site" evidence="1">
    <location>
        <position position="456"/>
    </location>
    <ligand>
        <name>CoA</name>
        <dbReference type="ChEBI" id="CHEBI:57287"/>
    </ligand>
</feature>
<feature type="binding site" evidence="4">
    <location>
        <position position="465"/>
    </location>
    <ligand>
        <name>(R)-carnitine</name>
        <dbReference type="ChEBI" id="CHEBI:16347"/>
    </ligand>
</feature>
<feature type="binding site" evidence="1">
    <location>
        <position position="504"/>
    </location>
    <ligand>
        <name>CoA</name>
        <dbReference type="ChEBI" id="CHEBI:57287"/>
    </ligand>
</feature>
<feature type="binding site" evidence="1">
    <location>
        <position position="555"/>
    </location>
    <ligand>
        <name>CoA</name>
        <dbReference type="ChEBI" id="CHEBI:57287"/>
    </ligand>
</feature>
<feature type="modified residue" description="N6-succinyllysine" evidence="1">
    <location>
        <position position="93"/>
    </location>
</feature>
<feature type="modified residue" description="N6-acetyllysine; alternate" evidence="17">
    <location>
        <position position="261"/>
    </location>
</feature>
<feature type="modified residue" description="N6-succinyllysine; alternate" evidence="1">
    <location>
        <position position="261"/>
    </location>
</feature>
<feature type="modified residue" description="N6-acetyllysine" evidence="17">
    <location>
        <position position="268"/>
    </location>
</feature>
<feature type="splice variant" id="VSP_000792" description="In isoform 2." evidence="13">
    <location>
        <begin position="1"/>
        <end position="21"/>
    </location>
</feature>
<feature type="splice variant" id="VSP_012798" description="In isoform 3." evidence="10 12">
    <location>
        <begin position="282"/>
        <end position="363"/>
    </location>
</feature>
<feature type="sequence variant" id="VAR_080636" description="In NBIA8; uncertain significance; loss of expression at the protein level and drastic decrease in beta-oxidation of palmitate in homozygous patient's primary fibroblasts as compared to wild-type cells; primary fibroblasts from a homozygous patient show much higher intracellular iron content than fibroblasts from control individuals and abnormally elevated levels of transferrin receptor 1/TFRC at the cell surface; dbSNP:rs138665095." evidence="7">
    <original>R</original>
    <variation>H</variation>
    <location>
        <position position="321"/>
    </location>
</feature>
<feature type="sequence variant" id="VAR_047780" description="In dbSNP:rs3118635." evidence="5 8 9">
    <original>L</original>
    <variation>M</variation>
    <location>
        <position position="372"/>
    </location>
</feature>
<feature type="sequence variant" id="VAR_047781" description="In dbSNP:rs17459086.">
    <original>A</original>
    <variation>P</variation>
    <location>
        <position position="624"/>
    </location>
</feature>
<feature type="mutagenesis site" description="Increases the KM for carnitine 100-fold." evidence="4">
    <original>Y</original>
    <variation>A</variation>
    <location>
        <position position="452"/>
    </location>
</feature>
<feature type="mutagenesis site" description="Increases the KM for carnitine 320-fold and reduces enzyme activity 10000-fold." evidence="4">
    <original>Y</original>
    <variation>F</variation>
    <location>
        <position position="452"/>
    </location>
</feature>
<feature type="mutagenesis site" description="Increases the KM for carnitine almost 70-fold and reduces enzyme activity 450-fold." evidence="4">
    <original>T</original>
    <variation>A</variation>
    <location>
        <position position="465"/>
    </location>
</feature>
<feature type="mutagenesis site" description="Increases the KM for carnitine 230-fold and reduces enzyme activity almost 100-fold." evidence="4">
    <original>R</original>
    <variation>Q</variation>
    <location>
        <position position="518"/>
    </location>
</feature>
<feature type="mutagenesis site" description="Increases the KM for carnitine 18-fold and reduces enzyme activity 100-fold." evidence="4">
    <original>F</original>
    <variation>A</variation>
    <location>
        <position position="566"/>
    </location>
</feature>
<feature type="mutagenesis site" description="No effect." evidence="4">
    <original>F</original>
    <variation>Y</variation>
    <location>
        <position position="566"/>
    </location>
</feature>
<feature type="sequence conflict" description="In Ref. 5; CAA55359." evidence="13" ref="5">
    <original>E</original>
    <variation>G</variation>
    <location>
        <position position="88"/>
    </location>
</feature>
<feature type="sequence conflict" description="In Ref. 5; CAA55359." evidence="13" ref="5">
    <original>P</original>
    <variation>F</variation>
    <location>
        <position position="349"/>
    </location>
</feature>
<feature type="sequence conflict" description="In Ref. 5; CAA55359." evidence="13" ref="5">
    <original>D</original>
    <variation>G</variation>
    <location>
        <position position="517"/>
    </location>
</feature>
<feature type="sequence conflict" description="In Ref. 5; CAA55359." evidence="13" ref="5">
    <original>M</original>
    <variation>T</variation>
    <location>
        <position position="534"/>
    </location>
</feature>
<feature type="helix" evidence="18">
    <location>
        <begin position="43"/>
        <end position="54"/>
    </location>
</feature>
<feature type="turn" evidence="18">
    <location>
        <begin position="55"/>
        <end position="57"/>
    </location>
</feature>
<feature type="helix" evidence="18">
    <location>
        <begin position="60"/>
        <end position="74"/>
    </location>
</feature>
<feature type="helix" evidence="18">
    <location>
        <begin position="79"/>
        <end position="93"/>
    </location>
</feature>
<feature type="strand" evidence="18">
    <location>
        <begin position="94"/>
        <end position="96"/>
    </location>
</feature>
<feature type="helix" evidence="18">
    <location>
        <begin position="99"/>
        <end position="106"/>
    </location>
</feature>
<feature type="turn" evidence="18">
    <location>
        <begin position="107"/>
        <end position="109"/>
    </location>
</feature>
<feature type="turn" evidence="18">
    <location>
        <begin position="116"/>
        <end position="118"/>
    </location>
</feature>
<feature type="strand" evidence="18">
    <location>
        <begin position="121"/>
        <end position="123"/>
    </location>
</feature>
<feature type="helix" evidence="18">
    <location>
        <begin position="132"/>
        <end position="154"/>
    </location>
</feature>
<feature type="helix" evidence="18">
    <location>
        <begin position="171"/>
        <end position="175"/>
    </location>
</feature>
<feature type="strand" evidence="18">
    <location>
        <begin position="179"/>
        <end position="182"/>
    </location>
</feature>
<feature type="strand" evidence="18">
    <location>
        <begin position="185"/>
        <end position="187"/>
    </location>
</feature>
<feature type="strand" evidence="18">
    <location>
        <begin position="189"/>
        <end position="192"/>
    </location>
</feature>
<feature type="strand" evidence="18">
    <location>
        <begin position="196"/>
        <end position="198"/>
    </location>
</feature>
<feature type="strand" evidence="18">
    <location>
        <begin position="202"/>
        <end position="207"/>
    </location>
</feature>
<feature type="strand" evidence="18">
    <location>
        <begin position="210"/>
        <end position="215"/>
    </location>
</feature>
<feature type="helix" evidence="18">
    <location>
        <begin position="226"/>
        <end position="238"/>
    </location>
</feature>
<feature type="helix" evidence="18">
    <location>
        <begin position="248"/>
        <end position="253"/>
    </location>
</feature>
<feature type="helix" evidence="18">
    <location>
        <begin position="256"/>
        <end position="266"/>
    </location>
</feature>
<feature type="helix" evidence="18">
    <location>
        <begin position="270"/>
        <end position="281"/>
    </location>
</feature>
<feature type="strand" evidence="18">
    <location>
        <begin position="285"/>
        <end position="289"/>
    </location>
</feature>
<feature type="strand" evidence="19">
    <location>
        <begin position="297"/>
        <end position="299"/>
    </location>
</feature>
<feature type="helix" evidence="18">
    <location>
        <begin position="300"/>
        <end position="310"/>
    </location>
</feature>
<feature type="turn" evidence="18">
    <location>
        <begin position="314"/>
        <end position="319"/>
    </location>
</feature>
<feature type="strand" evidence="18">
    <location>
        <begin position="325"/>
        <end position="332"/>
    </location>
</feature>
<feature type="strand" evidence="18">
    <location>
        <begin position="337"/>
        <end position="341"/>
    </location>
</feature>
<feature type="helix" evidence="18">
    <location>
        <begin position="348"/>
        <end position="363"/>
    </location>
</feature>
<feature type="strand" evidence="18">
    <location>
        <begin position="379"/>
        <end position="381"/>
    </location>
</feature>
<feature type="helix" evidence="18">
    <location>
        <begin position="387"/>
        <end position="406"/>
    </location>
</feature>
<feature type="strand" evidence="18">
    <location>
        <begin position="407"/>
        <end position="414"/>
    </location>
</feature>
<feature type="helix" evidence="18">
    <location>
        <begin position="420"/>
        <end position="424"/>
    </location>
</feature>
<feature type="helix" evidence="18">
    <location>
        <begin position="429"/>
        <end position="445"/>
    </location>
</feature>
<feature type="strand" evidence="18">
    <location>
        <begin position="451"/>
        <end position="456"/>
    </location>
</feature>
<feature type="strand" evidence="18">
    <location>
        <begin position="465"/>
        <end position="469"/>
    </location>
</feature>
<feature type="helix" evidence="18">
    <location>
        <begin position="473"/>
        <end position="482"/>
    </location>
</feature>
<feature type="helix" evidence="18">
    <location>
        <begin position="489"/>
        <end position="511"/>
    </location>
</feature>
<feature type="helix" evidence="18">
    <location>
        <begin position="517"/>
        <end position="529"/>
    </location>
</feature>
<feature type="helix" evidence="18">
    <location>
        <begin position="536"/>
        <end position="539"/>
    </location>
</feature>
<feature type="helix" evidence="18">
    <location>
        <begin position="541"/>
        <end position="546"/>
    </location>
</feature>
<feature type="strand" evidence="18">
    <location>
        <begin position="550"/>
        <end position="555"/>
    </location>
</feature>
<feature type="strand" evidence="18">
    <location>
        <begin position="559"/>
        <end position="561"/>
    </location>
</feature>
<feature type="strand" evidence="18">
    <location>
        <begin position="563"/>
        <end position="565"/>
    </location>
</feature>
<feature type="strand" evidence="18">
    <location>
        <begin position="574"/>
        <end position="580"/>
    </location>
</feature>
<feature type="strand" evidence="18">
    <location>
        <begin position="585"/>
        <end position="592"/>
    </location>
</feature>
<feature type="helix" evidence="18">
    <location>
        <begin position="600"/>
        <end position="619"/>
    </location>
</feature>
<protein>
    <recommendedName>
        <fullName evidence="13">Carnitine O-acetyltransferase</fullName>
        <shortName>Carnitine acetylase</shortName>
        <ecNumber evidence="6">2.3.1.137</ecNumber>
        <ecNumber evidence="4 6">2.3.1.7</ecNumber>
    </recommendedName>
    <alternativeName>
        <fullName>Carnitine acetyltransferase</fullName>
        <shortName>CAT</shortName>
        <shortName evidence="11">CrAT</shortName>
    </alternativeName>
</protein>
<reference key="1">
    <citation type="submission" date="2003-05" db="EMBL/GenBank/DDBJ databases">
        <title>Cloning of human full-length CDSs in BD Creator(TM) system donor vector.</title>
        <authorList>
            <person name="Kalnine N."/>
            <person name="Chen X."/>
            <person name="Rolfs A."/>
            <person name="Halleck A."/>
            <person name="Hines L."/>
            <person name="Eisenstein S."/>
            <person name="Koundinya M."/>
            <person name="Raphael J."/>
            <person name="Moreira D."/>
            <person name="Kelley T."/>
            <person name="LaBaer J."/>
            <person name="Lin Y."/>
            <person name="Phelan M."/>
            <person name="Farmer A."/>
        </authorList>
    </citation>
    <scope>NUCLEOTIDE SEQUENCE [LARGE SCALE MRNA] (ISOFORM 3)</scope>
    <scope>VARIANT MET-372</scope>
</reference>
<reference key="2">
    <citation type="journal article" date="2004" name="Nature">
        <title>DNA sequence and analysis of human chromosome 9.</title>
        <authorList>
            <person name="Humphray S.J."/>
            <person name="Oliver K."/>
            <person name="Hunt A.R."/>
            <person name="Plumb R.W."/>
            <person name="Loveland J.E."/>
            <person name="Howe K.L."/>
            <person name="Andrews T.D."/>
            <person name="Searle S."/>
            <person name="Hunt S.E."/>
            <person name="Scott C.E."/>
            <person name="Jones M.C."/>
            <person name="Ainscough R."/>
            <person name="Almeida J.P."/>
            <person name="Ambrose K.D."/>
            <person name="Ashwell R.I.S."/>
            <person name="Babbage A.K."/>
            <person name="Babbage S."/>
            <person name="Bagguley C.L."/>
            <person name="Bailey J."/>
            <person name="Banerjee R."/>
            <person name="Barker D.J."/>
            <person name="Barlow K.F."/>
            <person name="Bates K."/>
            <person name="Beasley H."/>
            <person name="Beasley O."/>
            <person name="Bird C.P."/>
            <person name="Bray-Allen S."/>
            <person name="Brown A.J."/>
            <person name="Brown J.Y."/>
            <person name="Burford D."/>
            <person name="Burrill W."/>
            <person name="Burton J."/>
            <person name="Carder C."/>
            <person name="Carter N.P."/>
            <person name="Chapman J.C."/>
            <person name="Chen Y."/>
            <person name="Clarke G."/>
            <person name="Clark S.Y."/>
            <person name="Clee C.M."/>
            <person name="Clegg S."/>
            <person name="Collier R.E."/>
            <person name="Corby N."/>
            <person name="Crosier M."/>
            <person name="Cummings A.T."/>
            <person name="Davies J."/>
            <person name="Dhami P."/>
            <person name="Dunn M."/>
            <person name="Dutta I."/>
            <person name="Dyer L.W."/>
            <person name="Earthrowl M.E."/>
            <person name="Faulkner L."/>
            <person name="Fleming C.J."/>
            <person name="Frankish A."/>
            <person name="Frankland J.A."/>
            <person name="French L."/>
            <person name="Fricker D.G."/>
            <person name="Garner P."/>
            <person name="Garnett J."/>
            <person name="Ghori J."/>
            <person name="Gilbert J.G.R."/>
            <person name="Glison C."/>
            <person name="Grafham D.V."/>
            <person name="Gribble S."/>
            <person name="Griffiths C."/>
            <person name="Griffiths-Jones S."/>
            <person name="Grocock R."/>
            <person name="Guy J."/>
            <person name="Hall R.E."/>
            <person name="Hammond S."/>
            <person name="Harley J.L."/>
            <person name="Harrison E.S.I."/>
            <person name="Hart E.A."/>
            <person name="Heath P.D."/>
            <person name="Henderson C.D."/>
            <person name="Hopkins B.L."/>
            <person name="Howard P.J."/>
            <person name="Howden P.J."/>
            <person name="Huckle E."/>
            <person name="Johnson C."/>
            <person name="Johnson D."/>
            <person name="Joy A.A."/>
            <person name="Kay M."/>
            <person name="Keenan S."/>
            <person name="Kershaw J.K."/>
            <person name="Kimberley A.M."/>
            <person name="King A."/>
            <person name="Knights A."/>
            <person name="Laird G.K."/>
            <person name="Langford C."/>
            <person name="Lawlor S."/>
            <person name="Leongamornlert D.A."/>
            <person name="Leversha M."/>
            <person name="Lloyd C."/>
            <person name="Lloyd D.M."/>
            <person name="Lovell J."/>
            <person name="Martin S."/>
            <person name="Mashreghi-Mohammadi M."/>
            <person name="Matthews L."/>
            <person name="McLaren S."/>
            <person name="McLay K.E."/>
            <person name="McMurray A."/>
            <person name="Milne S."/>
            <person name="Nickerson T."/>
            <person name="Nisbett J."/>
            <person name="Nordsiek G."/>
            <person name="Pearce A.V."/>
            <person name="Peck A.I."/>
            <person name="Porter K.M."/>
            <person name="Pandian R."/>
            <person name="Pelan S."/>
            <person name="Phillimore B."/>
            <person name="Povey S."/>
            <person name="Ramsey Y."/>
            <person name="Rand V."/>
            <person name="Scharfe M."/>
            <person name="Sehra H.K."/>
            <person name="Shownkeen R."/>
            <person name="Sims S.K."/>
            <person name="Skuce C.D."/>
            <person name="Smith M."/>
            <person name="Steward C.A."/>
            <person name="Swarbreck D."/>
            <person name="Sycamore N."/>
            <person name="Tester J."/>
            <person name="Thorpe A."/>
            <person name="Tracey A."/>
            <person name="Tromans A."/>
            <person name="Thomas D.W."/>
            <person name="Wall M."/>
            <person name="Wallis J.M."/>
            <person name="West A.P."/>
            <person name="Whitehead S.L."/>
            <person name="Willey D.L."/>
            <person name="Williams S.A."/>
            <person name="Wilming L."/>
            <person name="Wray P.W."/>
            <person name="Young L."/>
            <person name="Ashurst J.L."/>
            <person name="Coulson A."/>
            <person name="Blocker H."/>
            <person name="Durbin R.M."/>
            <person name="Sulston J.E."/>
            <person name="Hubbard T."/>
            <person name="Jackson M.J."/>
            <person name="Bentley D.R."/>
            <person name="Beck S."/>
            <person name="Rogers J."/>
            <person name="Dunham I."/>
        </authorList>
    </citation>
    <scope>NUCLEOTIDE SEQUENCE [LARGE SCALE GENOMIC DNA]</scope>
</reference>
<reference key="3">
    <citation type="journal article" date="2004" name="Genome Res.">
        <title>The status, quality, and expansion of the NIH full-length cDNA project: the Mammalian Gene Collection (MGC).</title>
        <authorList>
            <consortium name="The MGC Project Team"/>
        </authorList>
    </citation>
    <scope>NUCLEOTIDE SEQUENCE [LARGE SCALE MRNA] (ISOFORM 3)</scope>
    <scope>VARIANT MET-372</scope>
    <source>
        <tissue>Placenta</tissue>
    </source>
</reference>
<reference key="4">
    <citation type="journal article" date="1994" name="Biochem. J.">
        <title>Divergent sequences in the 5' region of cDNA suggest alternative splicing as a mechanism for the generation of carnitine acetyltransferases with different subcellular localizations.</title>
        <authorList>
            <person name="Corti O."/>
            <person name="DiDonato S."/>
            <person name="Finocchiaro G."/>
        </authorList>
    </citation>
    <scope>NUCLEOTIDE SEQUENCE [GENOMIC DNA] OF 1-52 (ISOFORMS 1 AND 2)</scope>
    <scope>ALTERNATIVE SPLICING</scope>
</reference>
<reference key="5">
    <citation type="journal article" date="1994" name="Genomics">
        <title>Molecular cloning of cDNAs encoding human carnitine acetyltransferase and mapping of the corresponding gene to chromosome 9q34.1.</title>
        <authorList>
            <person name="Corti O."/>
            <person name="Finocchiaro G."/>
            <person name="Rossi E."/>
            <person name="Zuffardi O."/>
            <person name="Didonato S."/>
        </authorList>
    </citation>
    <scope>NUCLEOTIDE SEQUENCE [MRNA] OF 3-626 (ISOFORM 1)</scope>
    <scope>PARTIAL PROTEIN SEQUENCE</scope>
    <scope>VARIANT MET-372</scope>
</reference>
<reference key="6">
    <citation type="journal article" date="2009" name="Science">
        <title>Lysine acetylation targets protein complexes and co-regulates major cellular functions.</title>
        <authorList>
            <person name="Choudhary C."/>
            <person name="Kumar C."/>
            <person name="Gnad F."/>
            <person name="Nielsen M.L."/>
            <person name="Rehman M."/>
            <person name="Walther T.C."/>
            <person name="Olsen J.V."/>
            <person name="Mann M."/>
        </authorList>
    </citation>
    <scope>ACETYLATION [LARGE SCALE ANALYSIS] AT LYS-261 AND LYS-268</scope>
    <scope>IDENTIFICATION BY MASS SPECTROMETRY [LARGE SCALE ANALYSIS]</scope>
</reference>
<reference key="7">
    <citation type="journal article" date="2013" name="Biochim. Biophys. Acta">
        <title>Substrate specificity of human carnitine acetyltransferase: Implications for fatty acid and branched-chain amino acid metabolism.</title>
        <authorList>
            <person name="Violante S."/>
            <person name="Ijlst L."/>
            <person name="Ruiter J."/>
            <person name="Koster J."/>
            <person name="van Lenthe H."/>
            <person name="Duran M."/>
            <person name="de Almeida I.T."/>
            <person name="Wanders R.J."/>
            <person name="Houten S.M."/>
            <person name="Ventura F.V."/>
        </authorList>
    </citation>
    <scope>FUNCTION</scope>
    <scope>CATALYTIC ACTIVITY</scope>
    <scope>BIOPHYSICOCHEMICAL PROPERTIES</scope>
</reference>
<reference key="8">
    <citation type="journal article" date="2014" name="J. Proteomics">
        <title>An enzyme assisted RP-RPLC approach for in-depth analysis of human liver phosphoproteome.</title>
        <authorList>
            <person name="Bian Y."/>
            <person name="Song C."/>
            <person name="Cheng K."/>
            <person name="Dong M."/>
            <person name="Wang F."/>
            <person name="Huang J."/>
            <person name="Sun D."/>
            <person name="Wang L."/>
            <person name="Ye M."/>
            <person name="Zou H."/>
        </authorList>
    </citation>
    <scope>IDENTIFICATION BY MASS SPECTROMETRY [LARGE SCALE ANALYSIS]</scope>
    <source>
        <tissue>Liver</tissue>
    </source>
</reference>
<reference key="9">
    <citation type="journal article" date="2015" name="Proteomics">
        <title>N-terminome analysis of the human mitochondrial proteome.</title>
        <authorList>
            <person name="Vaca Jacome A.S."/>
            <person name="Rabilloud T."/>
            <person name="Schaeffer-Reiss C."/>
            <person name="Rompais M."/>
            <person name="Ayoub D."/>
            <person name="Lane L."/>
            <person name="Bairoch A."/>
            <person name="Van Dorsselaer A."/>
            <person name="Carapito C."/>
        </authorList>
    </citation>
    <scope>IDENTIFICATION BY MASS SPECTROMETRY [LARGE SCALE ANALYSIS]</scope>
</reference>
<reference key="10">
    <citation type="journal article" date="2018" name="Am. J. Hum. Genet.">
        <title>Impaired Transferrin Receptor Palmitoylation and Recycling in Neurodegeneration with Brain Iron Accumulation.</title>
        <authorList>
            <person name="Drecourt A."/>
            <person name="Babdor J."/>
            <person name="Dussiot M."/>
            <person name="Petit F."/>
            <person name="Goudin N."/>
            <person name="Garfa-Traore M."/>
            <person name="Habarou F."/>
            <person name="Bole-Feysot C."/>
            <person name="Nitschke P."/>
            <person name="Ottolenghi C."/>
            <person name="Metodiev M.D."/>
            <person name="Serre V."/>
            <person name="Desguerre I."/>
            <person name="Boddaert N."/>
            <person name="Hermine O."/>
            <person name="Munnich A."/>
            <person name="Roetig A."/>
        </authorList>
    </citation>
    <scope>INVOLVEMENT IN NBIA8</scope>
    <scope>VARIANT NBIA8 HIS-321</scope>
    <scope>CHARACTERIZATION OF VARIANT NBIA8 HIS-321</scope>
    <scope>FUNCTION</scope>
</reference>
<reference key="11">
    <citation type="journal article" date="2003" name="J. Biol. Chem.">
        <title>Structure of human carnitine acetyltransferase. Molecular basis for fatty acyl transfer.</title>
        <authorList>
            <person name="Wu D."/>
            <person name="Govindasamy L."/>
            <person name="Lian W."/>
            <person name="Gu Y."/>
            <person name="Kukar T."/>
            <person name="Agbandje-McKenna M."/>
            <person name="McKenna R."/>
        </authorList>
    </citation>
    <scope>X-RAY CRYSTALLOGRAPHY (1.6 ANGSTROMS) OF 35-626</scope>
    <scope>SUBUNIT</scope>
</reference>
<reference key="12">
    <citation type="journal article" date="2004" name="J. Struct. Biol.">
        <title>Structural and mutational characterization of L-carnitine binding to human carnitine acetyltransferase.</title>
        <authorList>
            <person name="Govindasamy L."/>
            <person name="Kukar T."/>
            <person name="Lian W."/>
            <person name="Pedersen B."/>
            <person name="Gu Y."/>
            <person name="Agbandje-McKenna M."/>
            <person name="Jin S."/>
            <person name="McKenna R."/>
            <person name="Wu D."/>
        </authorList>
    </citation>
    <scope>X-RAY CRYSTALLOGRAPHY (1.8 ANGSTROMS) OF 35-626 IN COMPLEX WITH CARNITINE</scope>
    <scope>MUTAGENESIS OF TYR-452; THR-465; ARG-518 AND PHE-566</scope>
    <scope>CATALYTIC ACTIVITY</scope>
    <scope>FUNCTION</scope>
</reference>